<name>FLUC1_GEOKA</name>
<evidence type="ECO:0000255" key="1">
    <source>
        <dbReference type="HAMAP-Rule" id="MF_00454"/>
    </source>
</evidence>
<feature type="chain" id="PRO_0000110102" description="Fluoride-specific ion channel FluC 1">
    <location>
        <begin position="1"/>
        <end position="116"/>
    </location>
</feature>
<feature type="transmembrane region" description="Helical" evidence="1">
    <location>
        <begin position="1"/>
        <end position="21"/>
    </location>
</feature>
<feature type="transmembrane region" description="Helical" evidence="1">
    <location>
        <begin position="32"/>
        <end position="52"/>
    </location>
</feature>
<feature type="transmembrane region" description="Helical" evidence="1">
    <location>
        <begin position="54"/>
        <end position="74"/>
    </location>
</feature>
<feature type="transmembrane region" description="Helical" evidence="1">
    <location>
        <begin position="93"/>
        <end position="113"/>
    </location>
</feature>
<feature type="binding site" evidence="1">
    <location>
        <position position="69"/>
    </location>
    <ligand>
        <name>Na(+)</name>
        <dbReference type="ChEBI" id="CHEBI:29101"/>
        <note>structural</note>
    </ligand>
</feature>
<feature type="binding site" evidence="1">
    <location>
        <position position="72"/>
    </location>
    <ligand>
        <name>Na(+)</name>
        <dbReference type="ChEBI" id="CHEBI:29101"/>
        <note>structural</note>
    </ligand>
</feature>
<keyword id="KW-1003">Cell membrane</keyword>
<keyword id="KW-0407">Ion channel</keyword>
<keyword id="KW-0406">Ion transport</keyword>
<keyword id="KW-0472">Membrane</keyword>
<keyword id="KW-0479">Metal-binding</keyword>
<keyword id="KW-1185">Reference proteome</keyword>
<keyword id="KW-0915">Sodium</keyword>
<keyword id="KW-0812">Transmembrane</keyword>
<keyword id="KW-1133">Transmembrane helix</keyword>
<keyword id="KW-0813">Transport</keyword>
<accession>Q5KWE9</accession>
<dbReference type="EMBL" id="BA000043">
    <property type="protein sequence ID" value="BAD76987.1"/>
    <property type="molecule type" value="Genomic_DNA"/>
</dbReference>
<dbReference type="SMR" id="Q5KWE9"/>
<dbReference type="STRING" id="235909.GK2702"/>
<dbReference type="KEGG" id="gka:GK2702"/>
<dbReference type="eggNOG" id="COG0239">
    <property type="taxonomic scope" value="Bacteria"/>
</dbReference>
<dbReference type="HOGENOM" id="CLU_114342_2_3_9"/>
<dbReference type="Proteomes" id="UP000001172">
    <property type="component" value="Chromosome"/>
</dbReference>
<dbReference type="GO" id="GO:0005886">
    <property type="term" value="C:plasma membrane"/>
    <property type="evidence" value="ECO:0007669"/>
    <property type="project" value="UniProtKB-SubCell"/>
</dbReference>
<dbReference type="GO" id="GO:0062054">
    <property type="term" value="F:fluoride channel activity"/>
    <property type="evidence" value="ECO:0007669"/>
    <property type="project" value="UniProtKB-UniRule"/>
</dbReference>
<dbReference type="GO" id="GO:0046872">
    <property type="term" value="F:metal ion binding"/>
    <property type="evidence" value="ECO:0007669"/>
    <property type="project" value="UniProtKB-KW"/>
</dbReference>
<dbReference type="GO" id="GO:0140114">
    <property type="term" value="P:cellular detoxification of fluoride"/>
    <property type="evidence" value="ECO:0007669"/>
    <property type="project" value="UniProtKB-UniRule"/>
</dbReference>
<dbReference type="HAMAP" id="MF_00454">
    <property type="entry name" value="FluC"/>
    <property type="match status" value="1"/>
</dbReference>
<dbReference type="InterPro" id="IPR003691">
    <property type="entry name" value="FluC"/>
</dbReference>
<dbReference type="NCBIfam" id="TIGR00494">
    <property type="entry name" value="crcB"/>
    <property type="match status" value="1"/>
</dbReference>
<dbReference type="NCBIfam" id="NF010801">
    <property type="entry name" value="PRK14205.1"/>
    <property type="match status" value="1"/>
</dbReference>
<dbReference type="PANTHER" id="PTHR28259">
    <property type="entry name" value="FLUORIDE EXPORT PROTEIN 1-RELATED"/>
    <property type="match status" value="1"/>
</dbReference>
<dbReference type="PANTHER" id="PTHR28259:SF16">
    <property type="entry name" value="FLUORIDE-SPECIFIC ION CHANNEL FLUC 2"/>
    <property type="match status" value="1"/>
</dbReference>
<dbReference type="Pfam" id="PF02537">
    <property type="entry name" value="CRCB"/>
    <property type="match status" value="1"/>
</dbReference>
<organism>
    <name type="scientific">Geobacillus kaustophilus (strain HTA426)</name>
    <dbReference type="NCBI Taxonomy" id="235909"/>
    <lineage>
        <taxon>Bacteria</taxon>
        <taxon>Bacillati</taxon>
        <taxon>Bacillota</taxon>
        <taxon>Bacilli</taxon>
        <taxon>Bacillales</taxon>
        <taxon>Anoxybacillaceae</taxon>
        <taxon>Geobacillus</taxon>
        <taxon>Geobacillus thermoleovorans group</taxon>
    </lineage>
</organism>
<sequence length="116" mass="12758">MYAPLFVAIGGFFGAMARYLVSRWAARRSPRFPLGTLIVNLLGSFLLGWLAGSGAADAAKLLVGTGFMGAFTTFSTLKWESVQMMQQRQWAKVVVYLAATYLCGVWLAWLGYHVGR</sequence>
<reference key="1">
    <citation type="journal article" date="2004" name="Nucleic Acids Res.">
        <title>Thermoadaptation trait revealed by the genome sequence of thermophilic Geobacillus kaustophilus.</title>
        <authorList>
            <person name="Takami H."/>
            <person name="Takaki Y."/>
            <person name="Chee G.-J."/>
            <person name="Nishi S."/>
            <person name="Shimamura S."/>
            <person name="Suzuki H."/>
            <person name="Matsui S."/>
            <person name="Uchiyama I."/>
        </authorList>
    </citation>
    <scope>NUCLEOTIDE SEQUENCE [LARGE SCALE GENOMIC DNA]</scope>
    <source>
        <strain>HTA426</strain>
    </source>
</reference>
<proteinExistence type="inferred from homology"/>
<protein>
    <recommendedName>
        <fullName evidence="1">Fluoride-specific ion channel FluC 1</fullName>
    </recommendedName>
</protein>
<comment type="function">
    <text evidence="1">Fluoride-specific ion channel. Important for reducing fluoride concentration in the cell, thus reducing its toxicity.</text>
</comment>
<comment type="catalytic activity">
    <reaction evidence="1">
        <text>fluoride(in) = fluoride(out)</text>
        <dbReference type="Rhea" id="RHEA:76159"/>
        <dbReference type="ChEBI" id="CHEBI:17051"/>
    </reaction>
    <physiologicalReaction direction="left-to-right" evidence="1">
        <dbReference type="Rhea" id="RHEA:76160"/>
    </physiologicalReaction>
</comment>
<comment type="activity regulation">
    <text evidence="1">Na(+) is not transported, but it plays an essential structural role and its presence is essential for fluoride channel function.</text>
</comment>
<comment type="subcellular location">
    <subcellularLocation>
        <location evidence="1">Cell membrane</location>
        <topology evidence="1">Multi-pass membrane protein</topology>
    </subcellularLocation>
</comment>
<comment type="similarity">
    <text evidence="1">Belongs to the fluoride channel Fluc/FEX (TC 1.A.43) family.</text>
</comment>
<gene>
    <name evidence="1" type="primary">fluC1</name>
    <name evidence="1" type="synonym">crcB1</name>
    <name type="ordered locus">GK2702</name>
</gene>